<name>SCRE2_USTVR</name>
<keyword id="KW-1049">Host periplasm</keyword>
<keyword id="KW-0964">Secreted</keyword>
<keyword id="KW-0732">Signal</keyword>
<keyword id="KW-0843">Virulence</keyword>
<comment type="function">
    <text evidence="2">Secreted effector required for full virulence of U.virens (PubMed:31105658). Inhibits host pathogen-associated molecular pattern-triggered immunity including flg22- and chitin-induced defense gene expression and oxidative burst (PubMed:31105658).</text>
</comment>
<comment type="subcellular location">
    <subcellularLocation>
        <location evidence="2">Secreted</location>
    </subcellularLocation>
    <subcellularLocation>
        <location evidence="2">Host cell</location>
    </subcellularLocation>
    <subcellularLocation>
        <location evidence="2">Host periplasm</location>
    </subcellularLocation>
    <text evidence="2">Localizes in periplasmic spaces and perhaps in multiple subcellular compartments of plant cells.</text>
</comment>
<comment type="induction">
    <text evidence="2">Expression is up-regulated during U.virens plant infection.</text>
</comment>
<comment type="domain">
    <text evidence="2">The Plant immunity suppression domain is sufficient to retain the ability to suppress immunity-associated responses.</text>
</comment>
<comment type="disruption phenotype">
    <text evidence="2">Greatly attenuates U.virens virulence to rice.</text>
</comment>
<accession>A0A063CBJ7</accession>
<reference key="1">
    <citation type="journal article" date="2016" name="Genome Announc.">
        <title>Genome sequence of Ustilaginoidea virens IPU010, a rice pathogenic fungus causing false smut.</title>
        <authorList>
            <person name="Kumagai T."/>
            <person name="Ishii T."/>
            <person name="Terai G."/>
            <person name="Umemura M."/>
            <person name="Machida M."/>
            <person name="Asai K."/>
        </authorList>
    </citation>
    <scope>NUCLEOTIDE SEQUENCE [LARGE SCALE GENOMIC DNA]</scope>
    <source>
        <strain>IPU010</strain>
    </source>
</reference>
<reference key="2">
    <citation type="journal article" date="2019" name="Front. Microbiol.">
        <title>A novel effector gene SCRE2 contributes to full virulence of Ustilaginoidea virens to Rice.</title>
        <authorList>
            <person name="Fang A."/>
            <person name="Gao H."/>
            <person name="Zhang N."/>
            <person name="Zheng X."/>
            <person name="Qiu S."/>
            <person name="Li Y."/>
            <person name="Zhou S."/>
            <person name="Cui F."/>
            <person name="Sun W."/>
        </authorList>
    </citation>
    <scope>FUNCTION</scope>
    <scope>INDUCTION</scope>
    <scope>SUBCELLULAR LOCATION</scope>
    <scope>DOMAIN</scope>
    <scope>DISRUPTION PHENOTYPE</scope>
</reference>
<sequence length="130" mass="14147">MLINAARLLLPAAALVHLSLAWATSDRCNGYSSTLIQIKHAGDIYKQPSVPGLPPPGVNPYSLIDTLLKNGEDWCKHCASPRVSVDAGRYKAQMDKLLSYAHPYSASSWDSVQSLGDALEHLCKASRKEN</sequence>
<protein>
    <recommendedName>
        <fullName evidence="3">Secreted cysteine-rich effector 2</fullName>
    </recommendedName>
</protein>
<evidence type="ECO:0000255" key="1"/>
<evidence type="ECO:0000269" key="2">
    <source>
    </source>
</evidence>
<evidence type="ECO:0000303" key="3">
    <source>
    </source>
</evidence>
<dbReference type="EMBL" id="BBTG02000020">
    <property type="protein sequence ID" value="GAO14134.1"/>
    <property type="molecule type" value="Genomic_DNA"/>
</dbReference>
<dbReference type="STRING" id="1159556.A0A063CBJ7"/>
<dbReference type="HOGENOM" id="CLU_1939689_0_0_1"/>
<dbReference type="PHI-base" id="PHI:9196"/>
<dbReference type="Proteomes" id="UP000054053">
    <property type="component" value="Unassembled WGS sequence"/>
</dbReference>
<dbReference type="GO" id="GO:0005576">
    <property type="term" value="C:extracellular region"/>
    <property type="evidence" value="ECO:0007669"/>
    <property type="project" value="UniProtKB-SubCell"/>
</dbReference>
<dbReference type="GO" id="GO:0043657">
    <property type="term" value="C:host cell"/>
    <property type="evidence" value="ECO:0007669"/>
    <property type="project" value="UniProtKB-SubCell"/>
</dbReference>
<dbReference type="GO" id="GO:0044229">
    <property type="term" value="C:host cell periplasmic space"/>
    <property type="evidence" value="ECO:0007669"/>
    <property type="project" value="UniProtKB-SubCell"/>
</dbReference>
<gene>
    <name evidence="3" type="primary">SCRE2</name>
    <name type="ORF">UVI_02037790</name>
</gene>
<organism>
    <name type="scientific">Ustilaginoidea virens</name>
    <name type="common">Rice false smut fungus</name>
    <name type="synonym">Villosiclava virens</name>
    <dbReference type="NCBI Taxonomy" id="1159556"/>
    <lineage>
        <taxon>Eukaryota</taxon>
        <taxon>Fungi</taxon>
        <taxon>Dikarya</taxon>
        <taxon>Ascomycota</taxon>
        <taxon>Pezizomycotina</taxon>
        <taxon>Sordariomycetes</taxon>
        <taxon>Hypocreomycetidae</taxon>
        <taxon>Hypocreales</taxon>
        <taxon>Clavicipitaceae</taxon>
        <taxon>Ustilaginoidea</taxon>
    </lineage>
</organism>
<feature type="signal peptide" evidence="1">
    <location>
        <begin position="1"/>
        <end position="23"/>
    </location>
</feature>
<feature type="chain" id="PRO_5008196035" description="Secreted cysteine-rich effector 2" evidence="1">
    <location>
        <begin position="24"/>
        <end position="130"/>
    </location>
</feature>
<feature type="region of interest" description="Plant immunity suppression domain" evidence="2">
    <location>
        <begin position="68"/>
        <end position="85"/>
    </location>
</feature>
<proteinExistence type="evidence at transcript level"/>